<reference key="1">
    <citation type="journal article" date="2010" name="J. Bacteriol.">
        <title>The genome of the amoeba symbiont 'Candidatus Amoebophilus asiaticus' reveals common mechanisms for host cell interaction among amoeba-associated bacteria.</title>
        <authorList>
            <person name="Schmitz-Esser S."/>
            <person name="Tischler P."/>
            <person name="Arnold R."/>
            <person name="Montanaro J."/>
            <person name="Wagner M."/>
            <person name="Rattei T."/>
            <person name="Horn M."/>
        </authorList>
    </citation>
    <scope>NUCLEOTIDE SEQUENCE [LARGE SCALE GENOMIC DNA]</scope>
    <source>
        <strain>5a2</strain>
    </source>
</reference>
<dbReference type="EMBL" id="CP001102">
    <property type="protein sequence ID" value="ACE05634.1"/>
    <property type="molecule type" value="Genomic_DNA"/>
</dbReference>
<dbReference type="RefSeq" id="WP_012472399.1">
    <property type="nucleotide sequence ID" value="NC_010830.1"/>
</dbReference>
<dbReference type="SMR" id="B3EUL5"/>
<dbReference type="STRING" id="452471.Aasi_0189"/>
<dbReference type="KEGG" id="aas:Aasi_0189"/>
<dbReference type="eggNOG" id="COG0255">
    <property type="taxonomic scope" value="Bacteria"/>
</dbReference>
<dbReference type="HOGENOM" id="CLU_158491_5_1_10"/>
<dbReference type="OrthoDB" id="5296761at2"/>
<dbReference type="Proteomes" id="UP000001227">
    <property type="component" value="Chromosome"/>
</dbReference>
<dbReference type="GO" id="GO:1990904">
    <property type="term" value="C:ribonucleoprotein complex"/>
    <property type="evidence" value="ECO:0007669"/>
    <property type="project" value="UniProtKB-KW"/>
</dbReference>
<dbReference type="GO" id="GO:0005840">
    <property type="term" value="C:ribosome"/>
    <property type="evidence" value="ECO:0007669"/>
    <property type="project" value="UniProtKB-KW"/>
</dbReference>
<dbReference type="GO" id="GO:0003735">
    <property type="term" value="F:structural constituent of ribosome"/>
    <property type="evidence" value="ECO:0007669"/>
    <property type="project" value="InterPro"/>
</dbReference>
<dbReference type="GO" id="GO:0006412">
    <property type="term" value="P:translation"/>
    <property type="evidence" value="ECO:0007669"/>
    <property type="project" value="UniProtKB-UniRule"/>
</dbReference>
<dbReference type="Gene3D" id="1.10.287.310">
    <property type="match status" value="1"/>
</dbReference>
<dbReference type="HAMAP" id="MF_00374">
    <property type="entry name" value="Ribosomal_uL29"/>
    <property type="match status" value="1"/>
</dbReference>
<dbReference type="InterPro" id="IPR001854">
    <property type="entry name" value="Ribosomal_uL29"/>
</dbReference>
<dbReference type="InterPro" id="IPR018254">
    <property type="entry name" value="Ribosomal_uL29_CS"/>
</dbReference>
<dbReference type="InterPro" id="IPR036049">
    <property type="entry name" value="Ribosomal_uL29_sf"/>
</dbReference>
<dbReference type="NCBIfam" id="TIGR00012">
    <property type="entry name" value="L29"/>
    <property type="match status" value="1"/>
</dbReference>
<dbReference type="Pfam" id="PF00831">
    <property type="entry name" value="Ribosomal_L29"/>
    <property type="match status" value="1"/>
</dbReference>
<dbReference type="SUPFAM" id="SSF46561">
    <property type="entry name" value="Ribosomal protein L29 (L29p)"/>
    <property type="match status" value="1"/>
</dbReference>
<dbReference type="PROSITE" id="PS00579">
    <property type="entry name" value="RIBOSOMAL_L29"/>
    <property type="match status" value="1"/>
</dbReference>
<feature type="chain" id="PRO_1000121727" description="Large ribosomal subunit protein uL29">
    <location>
        <begin position="1"/>
        <end position="62"/>
    </location>
</feature>
<accession>B3EUL5</accession>
<proteinExistence type="inferred from homology"/>
<name>RL29_AMOA5</name>
<keyword id="KW-1185">Reference proteome</keyword>
<keyword id="KW-0687">Ribonucleoprotein</keyword>
<keyword id="KW-0689">Ribosomal protein</keyword>
<protein>
    <recommendedName>
        <fullName evidence="1">Large ribosomal subunit protein uL29</fullName>
    </recommendedName>
    <alternativeName>
        <fullName evidence="2">50S ribosomal protein L29</fullName>
    </alternativeName>
</protein>
<sequence length="62" mass="7148">MKYAEISSLAIEELKEKIKIEQENLRKLKFAHTISPIENPTKIKNTRRLIARLETALNVKGS</sequence>
<evidence type="ECO:0000255" key="1">
    <source>
        <dbReference type="HAMAP-Rule" id="MF_00374"/>
    </source>
</evidence>
<evidence type="ECO:0000305" key="2"/>
<organism>
    <name type="scientific">Amoebophilus asiaticus (strain 5a2)</name>
    <dbReference type="NCBI Taxonomy" id="452471"/>
    <lineage>
        <taxon>Bacteria</taxon>
        <taxon>Pseudomonadati</taxon>
        <taxon>Bacteroidota</taxon>
        <taxon>Cytophagia</taxon>
        <taxon>Cytophagales</taxon>
        <taxon>Amoebophilaceae</taxon>
        <taxon>Candidatus Amoebophilus</taxon>
    </lineage>
</organism>
<gene>
    <name evidence="1" type="primary">rpmC</name>
    <name type="ordered locus">Aasi_0189</name>
</gene>
<comment type="similarity">
    <text evidence="1">Belongs to the universal ribosomal protein uL29 family.</text>
</comment>